<proteinExistence type="inferred from homology"/>
<organism>
    <name type="scientific">Actinobacillus succinogenes (strain ATCC 55618 / DSM 22257 / CCUG 43843 / 130Z)</name>
    <dbReference type="NCBI Taxonomy" id="339671"/>
    <lineage>
        <taxon>Bacteria</taxon>
        <taxon>Pseudomonadati</taxon>
        <taxon>Pseudomonadota</taxon>
        <taxon>Gammaproteobacteria</taxon>
        <taxon>Pasteurellales</taxon>
        <taxon>Pasteurellaceae</taxon>
        <taxon>Actinobacillus</taxon>
    </lineage>
</organism>
<name>RL32_ACTSZ</name>
<comment type="similarity">
    <text evidence="1">Belongs to the bacterial ribosomal protein bL32 family.</text>
</comment>
<reference key="1">
    <citation type="journal article" date="2010" name="BMC Genomics">
        <title>A genomic perspective on the potential of Actinobacillus succinogenes for industrial succinate production.</title>
        <authorList>
            <person name="McKinlay J.B."/>
            <person name="Laivenieks M."/>
            <person name="Schindler B.D."/>
            <person name="McKinlay A.A."/>
            <person name="Siddaramappa S."/>
            <person name="Challacombe J.F."/>
            <person name="Lowry S.R."/>
            <person name="Clum A."/>
            <person name="Lapidus A.L."/>
            <person name="Burkhart K.B."/>
            <person name="Harkins V."/>
            <person name="Vieille C."/>
        </authorList>
    </citation>
    <scope>NUCLEOTIDE SEQUENCE [LARGE SCALE GENOMIC DNA]</scope>
    <source>
        <strain>ATCC 55618 / DSM 22257 / CCUG 43843 / 130Z</strain>
    </source>
</reference>
<sequence length="56" mass="6392">MAVQQNKKSRSRRDMRRSHDALTTAAVSVDKASGETHLRHHVTADGYYRGRKVINK</sequence>
<feature type="chain" id="PRO_1000072059" description="Large ribosomal subunit protein bL32">
    <location>
        <begin position="1"/>
        <end position="56"/>
    </location>
</feature>
<feature type="region of interest" description="Disordered" evidence="2">
    <location>
        <begin position="1"/>
        <end position="37"/>
    </location>
</feature>
<feature type="compositionally biased region" description="Basic residues" evidence="2">
    <location>
        <begin position="7"/>
        <end position="16"/>
    </location>
</feature>
<evidence type="ECO:0000255" key="1">
    <source>
        <dbReference type="HAMAP-Rule" id="MF_00340"/>
    </source>
</evidence>
<evidence type="ECO:0000256" key="2">
    <source>
        <dbReference type="SAM" id="MobiDB-lite"/>
    </source>
</evidence>
<evidence type="ECO:0000305" key="3"/>
<dbReference type="EMBL" id="CP000746">
    <property type="protein sequence ID" value="ABR75351.1"/>
    <property type="molecule type" value="Genomic_DNA"/>
</dbReference>
<dbReference type="RefSeq" id="WP_005544470.1">
    <property type="nucleotide sequence ID" value="NC_009655.1"/>
</dbReference>
<dbReference type="SMR" id="A6VQV4"/>
<dbReference type="STRING" id="339671.Asuc_2005"/>
<dbReference type="GeneID" id="93296966"/>
<dbReference type="KEGG" id="asu:Asuc_2005"/>
<dbReference type="eggNOG" id="COG0333">
    <property type="taxonomic scope" value="Bacteria"/>
</dbReference>
<dbReference type="HOGENOM" id="CLU_129084_2_1_6"/>
<dbReference type="OrthoDB" id="9801927at2"/>
<dbReference type="Proteomes" id="UP000001114">
    <property type="component" value="Chromosome"/>
</dbReference>
<dbReference type="GO" id="GO:0015934">
    <property type="term" value="C:large ribosomal subunit"/>
    <property type="evidence" value="ECO:0007669"/>
    <property type="project" value="InterPro"/>
</dbReference>
<dbReference type="GO" id="GO:0003735">
    <property type="term" value="F:structural constituent of ribosome"/>
    <property type="evidence" value="ECO:0007669"/>
    <property type="project" value="InterPro"/>
</dbReference>
<dbReference type="GO" id="GO:0006412">
    <property type="term" value="P:translation"/>
    <property type="evidence" value="ECO:0007669"/>
    <property type="project" value="UniProtKB-UniRule"/>
</dbReference>
<dbReference type="Gene3D" id="1.20.5.640">
    <property type="entry name" value="Single helix bin"/>
    <property type="match status" value="1"/>
</dbReference>
<dbReference type="HAMAP" id="MF_00340">
    <property type="entry name" value="Ribosomal_bL32"/>
    <property type="match status" value="1"/>
</dbReference>
<dbReference type="InterPro" id="IPR002677">
    <property type="entry name" value="Ribosomal_bL32"/>
</dbReference>
<dbReference type="InterPro" id="IPR044957">
    <property type="entry name" value="Ribosomal_bL32_bact"/>
</dbReference>
<dbReference type="InterPro" id="IPR011332">
    <property type="entry name" value="Ribosomal_zn-bd"/>
</dbReference>
<dbReference type="NCBIfam" id="TIGR01031">
    <property type="entry name" value="rpmF_bact"/>
    <property type="match status" value="1"/>
</dbReference>
<dbReference type="PANTHER" id="PTHR35534">
    <property type="entry name" value="50S RIBOSOMAL PROTEIN L32"/>
    <property type="match status" value="1"/>
</dbReference>
<dbReference type="PANTHER" id="PTHR35534:SF1">
    <property type="entry name" value="LARGE RIBOSOMAL SUBUNIT PROTEIN BL32"/>
    <property type="match status" value="1"/>
</dbReference>
<dbReference type="Pfam" id="PF01783">
    <property type="entry name" value="Ribosomal_L32p"/>
    <property type="match status" value="1"/>
</dbReference>
<dbReference type="SUPFAM" id="SSF57829">
    <property type="entry name" value="Zn-binding ribosomal proteins"/>
    <property type="match status" value="1"/>
</dbReference>
<keyword id="KW-1185">Reference proteome</keyword>
<keyword id="KW-0687">Ribonucleoprotein</keyword>
<keyword id="KW-0689">Ribosomal protein</keyword>
<protein>
    <recommendedName>
        <fullName evidence="1">Large ribosomal subunit protein bL32</fullName>
    </recommendedName>
    <alternativeName>
        <fullName evidence="3">50S ribosomal protein L32</fullName>
    </alternativeName>
</protein>
<accession>A6VQV4</accession>
<gene>
    <name evidence="1" type="primary">rpmF</name>
    <name type="ordered locus">Asuc_2005</name>
</gene>